<evidence type="ECO:0000255" key="1">
    <source>
        <dbReference type="PROSITE-ProRule" id="PRU00434"/>
    </source>
</evidence>
<evidence type="ECO:0000255" key="2">
    <source>
        <dbReference type="PROSITE-ProRule" id="PRU00703"/>
    </source>
</evidence>
<evidence type="ECO:0000269" key="3">
    <source>
    </source>
</evidence>
<evidence type="ECO:0000269" key="4">
    <source>
    </source>
</evidence>
<evidence type="ECO:0000305" key="5"/>
<evidence type="ECO:0000305" key="6">
    <source>
    </source>
</evidence>
<keyword id="KW-0029">Amino-acid transport</keyword>
<keyword id="KW-0067">ATP-binding</keyword>
<keyword id="KW-0129">CBS domain</keyword>
<keyword id="KW-0547">Nucleotide-binding</keyword>
<keyword id="KW-1185">Reference proteome</keyword>
<keyword id="KW-0677">Repeat</keyword>
<keyword id="KW-0813">Transport</keyword>
<proteinExistence type="evidence at transcript level"/>
<accession>Q45460</accession>
<accession>O34332</accession>
<gene>
    <name type="primary">opuBA</name>
    <name type="synonym">proV</name>
    <name type="ordered locus">BSU33730</name>
</gene>
<sequence length="381" mass="43075">MLTLENVSKTYKGGKKAVNNVNLKIAKGEFICFIGPSGCGKTTTMKMINRLIEPSAGKIFIDGENIMDQDPVELRRKIGYVIQQIGLFPHMTIQQNISLVPKLLKWPEQQRKERARELLKLVDMGPEYVDRYPHELSGGQQQRIGVLRALAAEPPLILMDEPFGALDPITRDSLQEEFKKLQKTLHKTIVFVTHDMDEAIKLADRIVILKAGEIVQVGTPDDILRNPADEFVEEFIGKERLIQSSSPDVERVDQIMNTQPVTITADKTLSEAIQLMRQERVDSLLVVNDERVLQGYVDVEIIDQCRKKANLVSEVLHEDIYTVLGGTLLRDTVRKILKRGVKYVPVVDEDRRLIGIVTRASLVDIVYDSLWGEEKQLAALS</sequence>
<comment type="function">
    <text evidence="3">Involved in a high affinity multicomponent binding-protein-dependent transport system for choline. Probably responsible for energy coupling to the transport system.</text>
</comment>
<comment type="induction">
    <text evidence="4">Repressed by GbsR.</text>
</comment>
<comment type="miscellaneous">
    <text evidence="6">LH45 is not a natural strain. It has been constructed by transformation of strain 168 with linear DNA from B.subtilis ATCC 6633. It is a subtilin-producing mutant of B.subtilis 168 (PubMed:7592481).</text>
</comment>
<comment type="similarity">
    <text evidence="5">Belongs to the ABC transporter superfamily.</text>
</comment>
<name>OPUBA_BACSU</name>
<feature type="chain" id="PRO_0000092676" description="Choline transport ATP-binding protein OpuBA">
    <location>
        <begin position="1"/>
        <end position="381"/>
    </location>
</feature>
<feature type="domain" description="ABC transporter" evidence="1">
    <location>
        <begin position="2"/>
        <end position="236"/>
    </location>
</feature>
<feature type="domain" description="CBS 1" evidence="2">
    <location>
        <begin position="256"/>
        <end position="314"/>
    </location>
</feature>
<feature type="domain" description="CBS 2" evidence="2">
    <location>
        <begin position="316"/>
        <end position="374"/>
    </location>
</feature>
<feature type="binding site" evidence="1">
    <location>
        <begin position="35"/>
        <end position="42"/>
    </location>
    <ligand>
        <name>ATP</name>
        <dbReference type="ChEBI" id="CHEBI:30616"/>
    </ligand>
</feature>
<feature type="sequence variant" description="In strain: 168 / LH45.">
    <original>D</original>
    <variation>E</variation>
    <location>
        <position position="68"/>
    </location>
</feature>
<feature type="sequence variant" description="In strain: 168 / LH45.">
    <original>V</original>
    <variation>E</variation>
    <location>
        <position position="72"/>
    </location>
</feature>
<feature type="sequence variant" description="In strain: 168 / LH45.">
    <original>I</original>
    <variation>F</variation>
    <location>
        <position position="82"/>
    </location>
</feature>
<feature type="sequence variant" description="In strain: 168 / LH45.">
    <original>Q</original>
    <variation>H</variation>
    <location>
        <position position="110"/>
    </location>
</feature>
<feature type="sequence variant" description="In strain: 168 / LH45.">
    <original>V</original>
    <variation>L</variation>
    <location>
        <position position="129"/>
    </location>
</feature>
<feature type="sequence variant" description="In strain: 168 / LH45.">
    <original>Q</original>
    <variation>K</variation>
    <location>
        <position position="259"/>
    </location>
</feature>
<feature type="sequence variant" description="In strain: 168 / LH45.">
    <original>S</original>
    <variation>G</variation>
    <location>
        <position position="313"/>
    </location>
</feature>
<feature type="sequence variant" description="In strain: 168 / LH45.">
    <original>I</original>
    <variation>L</variation>
    <location>
        <position position="320"/>
    </location>
</feature>
<feature type="sequence variant" description="In strain: 168 / LH45.">
    <original>V</original>
    <variation>I</variation>
    <location>
        <position position="341"/>
    </location>
</feature>
<feature type="sequence variant" description="In strain: 168 / LH45.">
    <original>ED</original>
    <variation>GN</variation>
    <location>
        <begin position="349"/>
        <end position="350"/>
    </location>
</feature>
<feature type="sequence conflict" description="In Ref. 1; AAB01532." evidence="5" ref="1">
    <original>MLTLENVSKTY</original>
    <variation>MFADIRKCLENI</variation>
    <location>
        <begin position="1"/>
        <end position="11"/>
    </location>
</feature>
<feature type="sequence conflict" description="In Ref. 1; AAB01532." evidence="5" ref="1">
    <original>A</original>
    <variation>R</variation>
    <location>
        <position position="152"/>
    </location>
</feature>
<feature type="sequence conflict" description="In Ref. 1; AAB01532." evidence="5" ref="1">
    <original>NDER</original>
    <variation>DGEH</variation>
    <location>
        <begin position="288"/>
        <end position="291"/>
    </location>
</feature>
<feature type="sequence conflict" description="In Ref. 1; AAB01532." evidence="5" ref="1">
    <original>LWGEEKQLAALS</original>
    <variation>SGGKKISSRYCHREVTSHASYYSIFTNQRGRTPV</variation>
    <location>
        <begin position="370"/>
        <end position="381"/>
    </location>
</feature>
<dbReference type="EMBL" id="U38418">
    <property type="protein sequence ID" value="AAB01532.1"/>
    <property type="molecule type" value="Genomic_DNA"/>
</dbReference>
<dbReference type="EMBL" id="AF008930">
    <property type="protein sequence ID" value="AAC14356.1"/>
    <property type="molecule type" value="Genomic_DNA"/>
</dbReference>
<dbReference type="EMBL" id="AL009126">
    <property type="protein sequence ID" value="CAB15378.1"/>
    <property type="molecule type" value="Genomic_DNA"/>
</dbReference>
<dbReference type="PIR" id="G69669">
    <property type="entry name" value="G69669"/>
</dbReference>
<dbReference type="RefSeq" id="NP_391253.1">
    <property type="nucleotide sequence ID" value="NC_000964.3"/>
</dbReference>
<dbReference type="RefSeq" id="WP_003242811.1">
    <property type="nucleotide sequence ID" value="NZ_OZ025638.1"/>
</dbReference>
<dbReference type="SMR" id="Q45460"/>
<dbReference type="FunCoup" id="Q45460">
    <property type="interactions" value="604"/>
</dbReference>
<dbReference type="STRING" id="224308.BSU33730"/>
<dbReference type="TCDB" id="3.A.1.12.3">
    <property type="family name" value="the atp-binding cassette (abc) superfamily"/>
</dbReference>
<dbReference type="PaxDb" id="224308-BSU33730"/>
<dbReference type="EnsemblBacteria" id="CAB15378">
    <property type="protein sequence ID" value="CAB15378"/>
    <property type="gene ID" value="BSU_33730"/>
</dbReference>
<dbReference type="GeneID" id="936230"/>
<dbReference type="KEGG" id="bsu:BSU33730"/>
<dbReference type="PATRIC" id="fig|224308.179.peg.3658"/>
<dbReference type="eggNOG" id="COG0517">
    <property type="taxonomic scope" value="Bacteria"/>
</dbReference>
<dbReference type="eggNOG" id="COG1125">
    <property type="taxonomic scope" value="Bacteria"/>
</dbReference>
<dbReference type="InParanoid" id="Q45460"/>
<dbReference type="OrthoDB" id="9802264at2"/>
<dbReference type="PhylomeDB" id="Q45460"/>
<dbReference type="BioCyc" id="BSUB:BSU33730-MONOMER"/>
<dbReference type="Proteomes" id="UP000001570">
    <property type="component" value="Chromosome"/>
</dbReference>
<dbReference type="GO" id="GO:0016020">
    <property type="term" value="C:membrane"/>
    <property type="evidence" value="ECO:0007669"/>
    <property type="project" value="InterPro"/>
</dbReference>
<dbReference type="GO" id="GO:0005524">
    <property type="term" value="F:ATP binding"/>
    <property type="evidence" value="ECO:0007669"/>
    <property type="project" value="UniProtKB-KW"/>
</dbReference>
<dbReference type="GO" id="GO:0016887">
    <property type="term" value="F:ATP hydrolysis activity"/>
    <property type="evidence" value="ECO:0007669"/>
    <property type="project" value="InterPro"/>
</dbReference>
<dbReference type="GO" id="GO:0006865">
    <property type="term" value="P:amino acid transport"/>
    <property type="evidence" value="ECO:0007669"/>
    <property type="project" value="UniProtKB-KW"/>
</dbReference>
<dbReference type="GO" id="GO:0031460">
    <property type="term" value="P:glycine betaine transport"/>
    <property type="evidence" value="ECO:0007669"/>
    <property type="project" value="InterPro"/>
</dbReference>
<dbReference type="CDD" id="cd03295">
    <property type="entry name" value="ABC_OpuCA_Osmoprotection"/>
    <property type="match status" value="1"/>
</dbReference>
<dbReference type="CDD" id="cd04583">
    <property type="entry name" value="CBS_pair_ABC_OpuCA_assoc"/>
    <property type="match status" value="1"/>
</dbReference>
<dbReference type="FunFam" id="3.40.50.300:FF:000201">
    <property type="entry name" value="Glycine betaine/L-proline ABC transporter ATP-binding protein"/>
    <property type="match status" value="1"/>
</dbReference>
<dbReference type="Gene3D" id="3.10.580.10">
    <property type="entry name" value="CBS-domain"/>
    <property type="match status" value="1"/>
</dbReference>
<dbReference type="Gene3D" id="3.40.50.300">
    <property type="entry name" value="P-loop containing nucleotide triphosphate hydrolases"/>
    <property type="match status" value="1"/>
</dbReference>
<dbReference type="InterPro" id="IPR003593">
    <property type="entry name" value="AAA+_ATPase"/>
</dbReference>
<dbReference type="InterPro" id="IPR003439">
    <property type="entry name" value="ABC_transporter-like_ATP-bd"/>
</dbReference>
<dbReference type="InterPro" id="IPR017871">
    <property type="entry name" value="ABC_transporter-like_CS"/>
</dbReference>
<dbReference type="InterPro" id="IPR000644">
    <property type="entry name" value="CBS_dom"/>
</dbReference>
<dbReference type="InterPro" id="IPR046342">
    <property type="entry name" value="CBS_dom_sf"/>
</dbReference>
<dbReference type="InterPro" id="IPR005892">
    <property type="entry name" value="Gly-betaine_transp_ATP-bd"/>
</dbReference>
<dbReference type="InterPro" id="IPR027417">
    <property type="entry name" value="P-loop_NTPase"/>
</dbReference>
<dbReference type="NCBIfam" id="TIGR01186">
    <property type="entry name" value="proV"/>
    <property type="match status" value="1"/>
</dbReference>
<dbReference type="PANTHER" id="PTHR43117:SF3">
    <property type="entry name" value="CHOLINE TRANSPORT ATP-BINDING PROTEIN OPUBA"/>
    <property type="match status" value="1"/>
</dbReference>
<dbReference type="PANTHER" id="PTHR43117">
    <property type="entry name" value="OSMOPROTECTANT IMPORT ATP-BINDING PROTEIN OSMV"/>
    <property type="match status" value="1"/>
</dbReference>
<dbReference type="Pfam" id="PF00005">
    <property type="entry name" value="ABC_tran"/>
    <property type="match status" value="1"/>
</dbReference>
<dbReference type="Pfam" id="PF00571">
    <property type="entry name" value="CBS"/>
    <property type="match status" value="2"/>
</dbReference>
<dbReference type="SMART" id="SM00382">
    <property type="entry name" value="AAA"/>
    <property type="match status" value="1"/>
</dbReference>
<dbReference type="SMART" id="SM00116">
    <property type="entry name" value="CBS"/>
    <property type="match status" value="2"/>
</dbReference>
<dbReference type="SUPFAM" id="SSF54631">
    <property type="entry name" value="CBS-domain pair"/>
    <property type="match status" value="1"/>
</dbReference>
<dbReference type="SUPFAM" id="SSF52540">
    <property type="entry name" value="P-loop containing nucleoside triphosphate hydrolases"/>
    <property type="match status" value="1"/>
</dbReference>
<dbReference type="PROSITE" id="PS00211">
    <property type="entry name" value="ABC_TRANSPORTER_1"/>
    <property type="match status" value="1"/>
</dbReference>
<dbReference type="PROSITE" id="PS50893">
    <property type="entry name" value="ABC_TRANSPORTER_2"/>
    <property type="match status" value="1"/>
</dbReference>
<dbReference type="PROSITE" id="PS51371">
    <property type="entry name" value="CBS"/>
    <property type="match status" value="2"/>
</dbReference>
<organism>
    <name type="scientific">Bacillus subtilis (strain 168)</name>
    <dbReference type="NCBI Taxonomy" id="224308"/>
    <lineage>
        <taxon>Bacteria</taxon>
        <taxon>Bacillati</taxon>
        <taxon>Bacillota</taxon>
        <taxon>Bacilli</taxon>
        <taxon>Bacillales</taxon>
        <taxon>Bacillaceae</taxon>
        <taxon>Bacillus</taxon>
    </lineage>
</organism>
<reference key="1">
    <citation type="journal article" date="1995" name="J. Bacteriol.">
        <title>Characterization of a chimeric proU operon in a subtilin-producing mutant of Bacillus subtilis 168.</title>
        <authorList>
            <person name="Lin Y."/>
            <person name="Hansen J.N."/>
        </authorList>
    </citation>
    <scope>NUCLEOTIDE SEQUENCE [GENOMIC DNA]</scope>
    <source>
        <strain>168 / LH45</strain>
        <strain>ATCC 6633 / PCI 219 / NRS 231</strain>
    </source>
</reference>
<reference key="2">
    <citation type="journal article" date="1999" name="Mol. Microbiol.">
        <title>Two evolutionarily closely related ABC transporters mediate the uptake of choline for synthesis of the osmoprotectant glycine betaine in Bacillus subtilis.</title>
        <authorList>
            <person name="Kappes R.M."/>
            <person name="Kempf B."/>
            <person name="Kneip S."/>
            <person name="Boch J."/>
            <person name="Gade J."/>
            <person name="Meier-Wagner J."/>
            <person name="Bremer E."/>
        </authorList>
    </citation>
    <scope>NUCLEOTIDE SEQUENCE [GENOMIC DNA]</scope>
    <scope>FUNCTION</scope>
    <source>
        <strain>168 / JH642</strain>
    </source>
</reference>
<reference key="3">
    <citation type="journal article" date="1997" name="Nature">
        <title>The complete genome sequence of the Gram-positive bacterium Bacillus subtilis.</title>
        <authorList>
            <person name="Kunst F."/>
            <person name="Ogasawara N."/>
            <person name="Moszer I."/>
            <person name="Albertini A.M."/>
            <person name="Alloni G."/>
            <person name="Azevedo V."/>
            <person name="Bertero M.G."/>
            <person name="Bessieres P."/>
            <person name="Bolotin A."/>
            <person name="Borchert S."/>
            <person name="Borriss R."/>
            <person name="Boursier L."/>
            <person name="Brans A."/>
            <person name="Braun M."/>
            <person name="Brignell S.C."/>
            <person name="Bron S."/>
            <person name="Brouillet S."/>
            <person name="Bruschi C.V."/>
            <person name="Caldwell B."/>
            <person name="Capuano V."/>
            <person name="Carter N.M."/>
            <person name="Choi S.-K."/>
            <person name="Codani J.-J."/>
            <person name="Connerton I.F."/>
            <person name="Cummings N.J."/>
            <person name="Daniel R.A."/>
            <person name="Denizot F."/>
            <person name="Devine K.M."/>
            <person name="Duesterhoeft A."/>
            <person name="Ehrlich S.D."/>
            <person name="Emmerson P.T."/>
            <person name="Entian K.-D."/>
            <person name="Errington J."/>
            <person name="Fabret C."/>
            <person name="Ferrari E."/>
            <person name="Foulger D."/>
            <person name="Fritz C."/>
            <person name="Fujita M."/>
            <person name="Fujita Y."/>
            <person name="Fuma S."/>
            <person name="Galizzi A."/>
            <person name="Galleron N."/>
            <person name="Ghim S.-Y."/>
            <person name="Glaser P."/>
            <person name="Goffeau A."/>
            <person name="Golightly E.J."/>
            <person name="Grandi G."/>
            <person name="Guiseppi G."/>
            <person name="Guy B.J."/>
            <person name="Haga K."/>
            <person name="Haiech J."/>
            <person name="Harwood C.R."/>
            <person name="Henaut A."/>
            <person name="Hilbert H."/>
            <person name="Holsappel S."/>
            <person name="Hosono S."/>
            <person name="Hullo M.-F."/>
            <person name="Itaya M."/>
            <person name="Jones L.-M."/>
            <person name="Joris B."/>
            <person name="Karamata D."/>
            <person name="Kasahara Y."/>
            <person name="Klaerr-Blanchard M."/>
            <person name="Klein C."/>
            <person name="Kobayashi Y."/>
            <person name="Koetter P."/>
            <person name="Koningstein G."/>
            <person name="Krogh S."/>
            <person name="Kumano M."/>
            <person name="Kurita K."/>
            <person name="Lapidus A."/>
            <person name="Lardinois S."/>
            <person name="Lauber J."/>
            <person name="Lazarevic V."/>
            <person name="Lee S.-M."/>
            <person name="Levine A."/>
            <person name="Liu H."/>
            <person name="Masuda S."/>
            <person name="Mauel C."/>
            <person name="Medigue C."/>
            <person name="Medina N."/>
            <person name="Mellado R.P."/>
            <person name="Mizuno M."/>
            <person name="Moestl D."/>
            <person name="Nakai S."/>
            <person name="Noback M."/>
            <person name="Noone D."/>
            <person name="O'Reilly M."/>
            <person name="Ogawa K."/>
            <person name="Ogiwara A."/>
            <person name="Oudega B."/>
            <person name="Park S.-H."/>
            <person name="Parro V."/>
            <person name="Pohl T.M."/>
            <person name="Portetelle D."/>
            <person name="Porwollik S."/>
            <person name="Prescott A.M."/>
            <person name="Presecan E."/>
            <person name="Pujic P."/>
            <person name="Purnelle B."/>
            <person name="Rapoport G."/>
            <person name="Rey M."/>
            <person name="Reynolds S."/>
            <person name="Rieger M."/>
            <person name="Rivolta C."/>
            <person name="Rocha E."/>
            <person name="Roche B."/>
            <person name="Rose M."/>
            <person name="Sadaie Y."/>
            <person name="Sato T."/>
            <person name="Scanlan E."/>
            <person name="Schleich S."/>
            <person name="Schroeter R."/>
            <person name="Scoffone F."/>
            <person name="Sekiguchi J."/>
            <person name="Sekowska A."/>
            <person name="Seror S.J."/>
            <person name="Serror P."/>
            <person name="Shin B.-S."/>
            <person name="Soldo B."/>
            <person name="Sorokin A."/>
            <person name="Tacconi E."/>
            <person name="Takagi T."/>
            <person name="Takahashi H."/>
            <person name="Takemaru K."/>
            <person name="Takeuchi M."/>
            <person name="Tamakoshi A."/>
            <person name="Tanaka T."/>
            <person name="Terpstra P."/>
            <person name="Tognoni A."/>
            <person name="Tosato V."/>
            <person name="Uchiyama S."/>
            <person name="Vandenbol M."/>
            <person name="Vannier F."/>
            <person name="Vassarotti A."/>
            <person name="Viari A."/>
            <person name="Wambutt R."/>
            <person name="Wedler E."/>
            <person name="Wedler H."/>
            <person name="Weitzenegger T."/>
            <person name="Winters P."/>
            <person name="Wipat A."/>
            <person name="Yamamoto H."/>
            <person name="Yamane K."/>
            <person name="Yasumoto K."/>
            <person name="Yata K."/>
            <person name="Yoshida K."/>
            <person name="Yoshikawa H.-F."/>
            <person name="Zumstein E."/>
            <person name="Yoshikawa H."/>
            <person name="Danchin A."/>
        </authorList>
    </citation>
    <scope>NUCLEOTIDE SEQUENCE [LARGE SCALE GENOMIC DNA]</scope>
    <source>
        <strain>168</strain>
    </source>
</reference>
<reference key="4">
    <citation type="journal article" date="2012" name="J. Bacteriol.">
        <title>Genetic control of osmoadaptive glycine betaine synthesis in Bacillus subtilis through the choline-sensing and glycine betaine-responsive GbsR repressor.</title>
        <authorList>
            <person name="Nau-Wagner G."/>
            <person name="Opper D."/>
            <person name="Rolbetzki A."/>
            <person name="Boch J."/>
            <person name="Kempf B."/>
            <person name="Hoffmann T."/>
            <person name="Bremer E."/>
        </authorList>
    </citation>
    <scope>INDUCTION</scope>
    <source>
        <strain>168 / JH642</strain>
    </source>
</reference>
<protein>
    <recommendedName>
        <fullName>Choline transport ATP-binding protein OpuBA</fullName>
    </recommendedName>
</protein>